<keyword id="KW-0028">Amino-acid biosynthesis</keyword>
<keyword id="KW-0057">Aromatic amino acid biosynthesis</keyword>
<keyword id="KW-0456">Lyase</keyword>
<keyword id="KW-0704">Schiff base</keyword>
<protein>
    <recommendedName>
        <fullName evidence="1">3-dehydroquinate dehydratase</fullName>
        <shortName evidence="1">3-dehydroquinase</shortName>
        <ecNumber evidence="1">4.2.1.10</ecNumber>
    </recommendedName>
    <alternativeName>
        <fullName evidence="1">Type I DHQase</fullName>
    </alternativeName>
    <alternativeName>
        <fullName evidence="1">Type I dehydroquinase</fullName>
        <shortName evidence="1">DHQ1</shortName>
    </alternativeName>
</protein>
<proteinExistence type="inferred from homology"/>
<accession>C4ZYF5</accession>
<evidence type="ECO:0000255" key="1">
    <source>
        <dbReference type="HAMAP-Rule" id="MF_00214"/>
    </source>
</evidence>
<feature type="chain" id="PRO_1000204210" description="3-dehydroquinate dehydratase">
    <location>
        <begin position="1"/>
        <end position="252"/>
    </location>
</feature>
<feature type="active site" description="Proton donor/acceptor" evidence="1">
    <location>
        <position position="143"/>
    </location>
</feature>
<feature type="active site" description="Schiff-base intermediate with substrate" evidence="1">
    <location>
        <position position="170"/>
    </location>
</feature>
<feature type="binding site" evidence="1">
    <location>
        <position position="21"/>
    </location>
    <ligand>
        <name>3-dehydroquinate</name>
        <dbReference type="ChEBI" id="CHEBI:32364"/>
    </ligand>
</feature>
<feature type="binding site" evidence="1">
    <location>
        <begin position="46"/>
        <end position="48"/>
    </location>
    <ligand>
        <name>3-dehydroquinate</name>
        <dbReference type="ChEBI" id="CHEBI:32364"/>
    </ligand>
</feature>
<feature type="binding site" evidence="1">
    <location>
        <position position="82"/>
    </location>
    <ligand>
        <name>3-dehydroquinate</name>
        <dbReference type="ChEBI" id="CHEBI:32364"/>
    </ligand>
</feature>
<feature type="binding site" evidence="1">
    <location>
        <position position="213"/>
    </location>
    <ligand>
        <name>3-dehydroquinate</name>
        <dbReference type="ChEBI" id="CHEBI:32364"/>
    </ligand>
</feature>
<feature type="binding site" evidence="1">
    <location>
        <position position="232"/>
    </location>
    <ligand>
        <name>3-dehydroquinate</name>
        <dbReference type="ChEBI" id="CHEBI:32364"/>
    </ligand>
</feature>
<feature type="binding site" evidence="1">
    <location>
        <position position="236"/>
    </location>
    <ligand>
        <name>3-dehydroquinate</name>
        <dbReference type="ChEBI" id="CHEBI:32364"/>
    </ligand>
</feature>
<reference key="1">
    <citation type="journal article" date="2009" name="J. Bacteriol.">
        <title>Genomic sequencing reveals regulatory mutations and recombinational events in the widely used MC4100 lineage of Escherichia coli K-12.</title>
        <authorList>
            <person name="Ferenci T."/>
            <person name="Zhou Z."/>
            <person name="Betteridge T."/>
            <person name="Ren Y."/>
            <person name="Liu Y."/>
            <person name="Feng L."/>
            <person name="Reeves P.R."/>
            <person name="Wang L."/>
        </authorList>
    </citation>
    <scope>NUCLEOTIDE SEQUENCE [LARGE SCALE GENOMIC DNA]</scope>
    <source>
        <strain>K12 / MC4100 / BW2952</strain>
    </source>
</reference>
<name>AROD_ECOBW</name>
<organism>
    <name type="scientific">Escherichia coli (strain K12 / MC4100 / BW2952)</name>
    <dbReference type="NCBI Taxonomy" id="595496"/>
    <lineage>
        <taxon>Bacteria</taxon>
        <taxon>Pseudomonadati</taxon>
        <taxon>Pseudomonadota</taxon>
        <taxon>Gammaproteobacteria</taxon>
        <taxon>Enterobacterales</taxon>
        <taxon>Enterobacteriaceae</taxon>
        <taxon>Escherichia</taxon>
    </lineage>
</organism>
<comment type="function">
    <text evidence="1">Involved in the third step of the chorismate pathway, which leads to the biosynthesis of aromatic amino acids. Catalyzes the cis-dehydration of 3-dehydroquinate (DHQ) and introduces the first double bond of the aromatic ring to yield 3-dehydroshikimate.</text>
</comment>
<comment type="catalytic activity">
    <reaction evidence="1">
        <text>3-dehydroquinate = 3-dehydroshikimate + H2O</text>
        <dbReference type="Rhea" id="RHEA:21096"/>
        <dbReference type="ChEBI" id="CHEBI:15377"/>
        <dbReference type="ChEBI" id="CHEBI:16630"/>
        <dbReference type="ChEBI" id="CHEBI:32364"/>
        <dbReference type="EC" id="4.2.1.10"/>
    </reaction>
</comment>
<comment type="pathway">
    <text evidence="1">Metabolic intermediate biosynthesis; chorismate biosynthesis; chorismate from D-erythrose 4-phosphate and phosphoenolpyruvate: step 3/7.</text>
</comment>
<comment type="subunit">
    <text evidence="1">Homodimer.</text>
</comment>
<comment type="similarity">
    <text evidence="1">Belongs to the type-I 3-dehydroquinase family.</text>
</comment>
<sequence length="252" mass="27467">MKTVTVKDLVIGTGAPKIIVSLMAKDIASVKSEALAYREADFDILEWRVDHYADLSNVESVMAAAKILRETMPEKPLLFTFRSAKEGGEQAISTEAYIALNRAAIDSGLVDMIDLELFTGDDQVKETVAYAHAHDVKVVMSNHDFHKTPEAEEIIARLRKMQSFDADIPKIALMPQSTSDVLTLLAATLEMQEQYADRPIITMSMAKTGVISRLAGEVFGSAATFGAVKKASAPGQISVNDLRTVLTILHQA</sequence>
<gene>
    <name evidence="1" type="primary">aroD</name>
    <name type="ordered locus">BWG_1507</name>
</gene>
<dbReference type="EC" id="4.2.1.10" evidence="1"/>
<dbReference type="EMBL" id="CP001396">
    <property type="protein sequence ID" value="ACR61804.1"/>
    <property type="molecule type" value="Genomic_DNA"/>
</dbReference>
<dbReference type="RefSeq" id="WP_000860201.1">
    <property type="nucleotide sequence ID" value="NC_012759.1"/>
</dbReference>
<dbReference type="SMR" id="C4ZYF5"/>
<dbReference type="KEGG" id="ebw:BWG_1507"/>
<dbReference type="HOGENOM" id="CLU_064444_0_0_6"/>
<dbReference type="UniPathway" id="UPA00053">
    <property type="reaction ID" value="UER00086"/>
</dbReference>
<dbReference type="GO" id="GO:0003855">
    <property type="term" value="F:3-dehydroquinate dehydratase activity"/>
    <property type="evidence" value="ECO:0007669"/>
    <property type="project" value="UniProtKB-UniRule"/>
</dbReference>
<dbReference type="GO" id="GO:0046279">
    <property type="term" value="P:3,4-dihydroxybenzoate biosynthetic process"/>
    <property type="evidence" value="ECO:0007669"/>
    <property type="project" value="TreeGrafter"/>
</dbReference>
<dbReference type="GO" id="GO:0008652">
    <property type="term" value="P:amino acid biosynthetic process"/>
    <property type="evidence" value="ECO:0007669"/>
    <property type="project" value="UniProtKB-KW"/>
</dbReference>
<dbReference type="GO" id="GO:0009073">
    <property type="term" value="P:aromatic amino acid family biosynthetic process"/>
    <property type="evidence" value="ECO:0007669"/>
    <property type="project" value="UniProtKB-KW"/>
</dbReference>
<dbReference type="GO" id="GO:0009423">
    <property type="term" value="P:chorismate biosynthetic process"/>
    <property type="evidence" value="ECO:0007669"/>
    <property type="project" value="UniProtKB-UniRule"/>
</dbReference>
<dbReference type="CDD" id="cd00502">
    <property type="entry name" value="DHQase_I"/>
    <property type="match status" value="1"/>
</dbReference>
<dbReference type="FunFam" id="3.20.20.70:FF:000047">
    <property type="entry name" value="3-dehydroquinate dehydratase"/>
    <property type="match status" value="1"/>
</dbReference>
<dbReference type="Gene3D" id="3.20.20.70">
    <property type="entry name" value="Aldolase class I"/>
    <property type="match status" value="1"/>
</dbReference>
<dbReference type="HAMAP" id="MF_00214">
    <property type="entry name" value="AroD"/>
    <property type="match status" value="1"/>
</dbReference>
<dbReference type="InterPro" id="IPR018508">
    <property type="entry name" value="3-dehydroquinate_DH_AS"/>
</dbReference>
<dbReference type="InterPro" id="IPR013785">
    <property type="entry name" value="Aldolase_TIM"/>
</dbReference>
<dbReference type="InterPro" id="IPR001381">
    <property type="entry name" value="DHquinase_I"/>
</dbReference>
<dbReference type="InterPro" id="IPR050146">
    <property type="entry name" value="Type-I_3-dehydroquinase"/>
</dbReference>
<dbReference type="NCBIfam" id="TIGR01093">
    <property type="entry name" value="aroD"/>
    <property type="match status" value="1"/>
</dbReference>
<dbReference type="PANTHER" id="PTHR43699">
    <property type="entry name" value="3-DEHYDROQUINATE DEHYDRATASE"/>
    <property type="match status" value="1"/>
</dbReference>
<dbReference type="PANTHER" id="PTHR43699:SF1">
    <property type="entry name" value="3-DEHYDROQUINATE DEHYDRATASE"/>
    <property type="match status" value="1"/>
</dbReference>
<dbReference type="Pfam" id="PF01487">
    <property type="entry name" value="DHquinase_I"/>
    <property type="match status" value="1"/>
</dbReference>
<dbReference type="SUPFAM" id="SSF51569">
    <property type="entry name" value="Aldolase"/>
    <property type="match status" value="1"/>
</dbReference>
<dbReference type="PROSITE" id="PS01028">
    <property type="entry name" value="DEHYDROQUINASE_I"/>
    <property type="match status" value="1"/>
</dbReference>